<evidence type="ECO:0000255" key="1">
    <source>
        <dbReference type="HAMAP-Rule" id="MF_00099"/>
    </source>
</evidence>
<feature type="chain" id="PRO_0000157987" description="Protein-glutamate methylesterase/protein-glutamine glutaminase 2">
    <location>
        <begin position="1"/>
        <end position="356"/>
    </location>
</feature>
<feature type="domain" description="Response regulatory" evidence="1">
    <location>
        <begin position="4"/>
        <end position="121"/>
    </location>
</feature>
<feature type="domain" description="CheB-type methylesterase" evidence="1">
    <location>
        <begin position="169"/>
        <end position="356"/>
    </location>
</feature>
<feature type="active site" evidence="1">
    <location>
        <position position="181"/>
    </location>
</feature>
<feature type="active site" evidence="1">
    <location>
        <position position="207"/>
    </location>
</feature>
<feature type="active site" evidence="1">
    <location>
        <position position="303"/>
    </location>
</feature>
<feature type="modified residue" description="4-aspartylphosphate" evidence="1">
    <location>
        <position position="55"/>
    </location>
</feature>
<gene>
    <name evidence="1" type="primary">cheB2</name>
    <name type="ordered locus">CV_1009</name>
</gene>
<sequence>MSIKVLIVDDSAVVRQVLSQVFTAASGIEVMDVANDPYMAMDKMKARWPDVIVLDVEMPRMDGITFLKQLMASRPTPVVICSSLTQKGTDISMQAMAAGAVEVIAKPVSGVKGFLEESSHELVMAVRSAAAARMNRVRVMPSASGNPLETRPKLSADAILSAPTGSNVFATTERIIAIGTSTGGTQALEAVLTQLPRTCPGLAIVQHMPEKFTRSFADRLNSLSQIEVKEADNGDRILPGRALIAPGGKHMMVKRSGAYYQVEVVDGPLVSRHKPSVDVLFRSAAKFAGKNALGIIMTGMGDDGAKGLKEMHDCGAKTIAQDEESCVVFGMPKEAIKLGAADEVMPLELIAKAICR</sequence>
<accession>Q7NZB3</accession>
<organism>
    <name type="scientific">Chromobacterium violaceum (strain ATCC 12472 / DSM 30191 / JCM 1249 / CCUG 213 / NBRC 12614 / NCIMB 9131 / NCTC 9757 / MK)</name>
    <dbReference type="NCBI Taxonomy" id="243365"/>
    <lineage>
        <taxon>Bacteria</taxon>
        <taxon>Pseudomonadati</taxon>
        <taxon>Pseudomonadota</taxon>
        <taxon>Betaproteobacteria</taxon>
        <taxon>Neisseriales</taxon>
        <taxon>Chromobacteriaceae</taxon>
        <taxon>Chromobacterium</taxon>
    </lineage>
</organism>
<proteinExistence type="inferred from homology"/>
<dbReference type="EC" id="3.1.1.61" evidence="1"/>
<dbReference type="EC" id="3.5.1.44" evidence="1"/>
<dbReference type="EMBL" id="AE016825">
    <property type="protein sequence ID" value="AAQ58683.1"/>
    <property type="molecule type" value="Genomic_DNA"/>
</dbReference>
<dbReference type="RefSeq" id="WP_011134564.1">
    <property type="nucleotide sequence ID" value="NC_005085.1"/>
</dbReference>
<dbReference type="SMR" id="Q7NZB3"/>
<dbReference type="STRING" id="243365.CV_1009"/>
<dbReference type="GeneID" id="66366702"/>
<dbReference type="KEGG" id="cvi:CV_1009"/>
<dbReference type="eggNOG" id="COG2201">
    <property type="taxonomic scope" value="Bacteria"/>
</dbReference>
<dbReference type="HOGENOM" id="CLU_000445_51_0_4"/>
<dbReference type="OrthoDB" id="9793421at2"/>
<dbReference type="Proteomes" id="UP000001424">
    <property type="component" value="Chromosome"/>
</dbReference>
<dbReference type="GO" id="GO:0005737">
    <property type="term" value="C:cytoplasm"/>
    <property type="evidence" value="ECO:0007669"/>
    <property type="project" value="UniProtKB-SubCell"/>
</dbReference>
<dbReference type="GO" id="GO:0000156">
    <property type="term" value="F:phosphorelay response regulator activity"/>
    <property type="evidence" value="ECO:0007669"/>
    <property type="project" value="InterPro"/>
</dbReference>
<dbReference type="GO" id="GO:0008984">
    <property type="term" value="F:protein-glutamate methylesterase activity"/>
    <property type="evidence" value="ECO:0007669"/>
    <property type="project" value="UniProtKB-UniRule"/>
</dbReference>
<dbReference type="GO" id="GO:0050568">
    <property type="term" value="F:protein-glutamine glutaminase activity"/>
    <property type="evidence" value="ECO:0007669"/>
    <property type="project" value="UniProtKB-UniRule"/>
</dbReference>
<dbReference type="GO" id="GO:0006935">
    <property type="term" value="P:chemotaxis"/>
    <property type="evidence" value="ECO:0007669"/>
    <property type="project" value="UniProtKB-UniRule"/>
</dbReference>
<dbReference type="CDD" id="cd16432">
    <property type="entry name" value="CheB_Rec"/>
    <property type="match status" value="1"/>
</dbReference>
<dbReference type="CDD" id="cd17541">
    <property type="entry name" value="REC_CheB-like"/>
    <property type="match status" value="1"/>
</dbReference>
<dbReference type="Gene3D" id="3.40.50.2300">
    <property type="match status" value="1"/>
</dbReference>
<dbReference type="Gene3D" id="3.40.50.180">
    <property type="entry name" value="Methylesterase CheB, C-terminal domain"/>
    <property type="match status" value="1"/>
</dbReference>
<dbReference type="HAMAP" id="MF_00099">
    <property type="entry name" value="CheB_chemtxs"/>
    <property type="match status" value="1"/>
</dbReference>
<dbReference type="InterPro" id="IPR008248">
    <property type="entry name" value="CheB-like"/>
</dbReference>
<dbReference type="InterPro" id="IPR035909">
    <property type="entry name" value="CheB_C"/>
</dbReference>
<dbReference type="InterPro" id="IPR011006">
    <property type="entry name" value="CheY-like_superfamily"/>
</dbReference>
<dbReference type="InterPro" id="IPR000673">
    <property type="entry name" value="Sig_transdc_resp-reg_Me-estase"/>
</dbReference>
<dbReference type="InterPro" id="IPR001789">
    <property type="entry name" value="Sig_transdc_resp-reg_receiver"/>
</dbReference>
<dbReference type="NCBIfam" id="NF001965">
    <property type="entry name" value="PRK00742.1"/>
    <property type="match status" value="1"/>
</dbReference>
<dbReference type="NCBIfam" id="NF009206">
    <property type="entry name" value="PRK12555.1"/>
    <property type="match status" value="1"/>
</dbReference>
<dbReference type="PANTHER" id="PTHR42872">
    <property type="entry name" value="PROTEIN-GLUTAMATE METHYLESTERASE/PROTEIN-GLUTAMINE GLUTAMINASE"/>
    <property type="match status" value="1"/>
</dbReference>
<dbReference type="PANTHER" id="PTHR42872:SF6">
    <property type="entry name" value="PROTEIN-GLUTAMATE METHYLESTERASE_PROTEIN-GLUTAMINE GLUTAMINASE"/>
    <property type="match status" value="1"/>
</dbReference>
<dbReference type="Pfam" id="PF01339">
    <property type="entry name" value="CheB_methylest"/>
    <property type="match status" value="1"/>
</dbReference>
<dbReference type="Pfam" id="PF00072">
    <property type="entry name" value="Response_reg"/>
    <property type="match status" value="1"/>
</dbReference>
<dbReference type="PIRSF" id="PIRSF000876">
    <property type="entry name" value="RR_chemtxs_CheB"/>
    <property type="match status" value="1"/>
</dbReference>
<dbReference type="SMART" id="SM00448">
    <property type="entry name" value="REC"/>
    <property type="match status" value="1"/>
</dbReference>
<dbReference type="SUPFAM" id="SSF52172">
    <property type="entry name" value="CheY-like"/>
    <property type="match status" value="1"/>
</dbReference>
<dbReference type="SUPFAM" id="SSF52738">
    <property type="entry name" value="Methylesterase CheB, C-terminal domain"/>
    <property type="match status" value="1"/>
</dbReference>
<dbReference type="PROSITE" id="PS50122">
    <property type="entry name" value="CHEB"/>
    <property type="match status" value="1"/>
</dbReference>
<dbReference type="PROSITE" id="PS50110">
    <property type="entry name" value="RESPONSE_REGULATORY"/>
    <property type="match status" value="1"/>
</dbReference>
<comment type="function">
    <text evidence="1">Involved in chemotaxis. Part of a chemotaxis signal transduction system that modulates chemotaxis in response to various stimuli. Catalyzes the demethylation of specific methylglutamate residues introduced into the chemoreceptors (methyl-accepting chemotaxis proteins or MCP) by CheR. Also mediates the irreversible deamidation of specific glutamine residues to glutamic acid.</text>
</comment>
<comment type="catalytic activity">
    <reaction evidence="1">
        <text>[protein]-L-glutamate 5-O-methyl ester + H2O = L-glutamyl-[protein] + methanol + H(+)</text>
        <dbReference type="Rhea" id="RHEA:23236"/>
        <dbReference type="Rhea" id="RHEA-COMP:10208"/>
        <dbReference type="Rhea" id="RHEA-COMP:10311"/>
        <dbReference type="ChEBI" id="CHEBI:15377"/>
        <dbReference type="ChEBI" id="CHEBI:15378"/>
        <dbReference type="ChEBI" id="CHEBI:17790"/>
        <dbReference type="ChEBI" id="CHEBI:29973"/>
        <dbReference type="ChEBI" id="CHEBI:82795"/>
        <dbReference type="EC" id="3.1.1.61"/>
    </reaction>
</comment>
<comment type="catalytic activity">
    <reaction evidence="1">
        <text>L-glutaminyl-[protein] + H2O = L-glutamyl-[protein] + NH4(+)</text>
        <dbReference type="Rhea" id="RHEA:16441"/>
        <dbReference type="Rhea" id="RHEA-COMP:10207"/>
        <dbReference type="Rhea" id="RHEA-COMP:10208"/>
        <dbReference type="ChEBI" id="CHEBI:15377"/>
        <dbReference type="ChEBI" id="CHEBI:28938"/>
        <dbReference type="ChEBI" id="CHEBI:29973"/>
        <dbReference type="ChEBI" id="CHEBI:30011"/>
        <dbReference type="EC" id="3.5.1.44"/>
    </reaction>
</comment>
<comment type="subcellular location">
    <subcellularLocation>
        <location evidence="1">Cytoplasm</location>
    </subcellularLocation>
</comment>
<comment type="domain">
    <text evidence="1">Contains a C-terminal catalytic domain, and an N-terminal region which modulates catalytic activity.</text>
</comment>
<comment type="PTM">
    <text evidence="1">Phosphorylated by CheA. Phosphorylation of the N-terminal regulatory domain activates the methylesterase activity.</text>
</comment>
<comment type="similarity">
    <text evidence="1">Belongs to the CheB family.</text>
</comment>
<protein>
    <recommendedName>
        <fullName evidence="1">Protein-glutamate methylesterase/protein-glutamine glutaminase 2</fullName>
        <ecNumber evidence="1">3.1.1.61</ecNumber>
        <ecNumber evidence="1">3.5.1.44</ecNumber>
    </recommendedName>
</protein>
<name>CHEB2_CHRVO</name>
<reference key="1">
    <citation type="journal article" date="2003" name="Proc. Natl. Acad. Sci. U.S.A.">
        <title>The complete genome sequence of Chromobacterium violaceum reveals remarkable and exploitable bacterial adaptability.</title>
        <authorList>
            <person name="Vasconcelos A.T.R."/>
            <person name="de Almeida D.F."/>
            <person name="Hungria M."/>
            <person name="Guimaraes C.T."/>
            <person name="Antonio R.V."/>
            <person name="Almeida F.C."/>
            <person name="de Almeida L.G.P."/>
            <person name="de Almeida R."/>
            <person name="Alves-Gomes J.A."/>
            <person name="Andrade E.M."/>
            <person name="Araripe J."/>
            <person name="de Araujo M.F.F."/>
            <person name="Astolfi-Filho S."/>
            <person name="Azevedo V."/>
            <person name="Baptista A.J."/>
            <person name="Bataus L.A.M."/>
            <person name="Batista J.S."/>
            <person name="Belo A."/>
            <person name="van den Berg C."/>
            <person name="Bogo M."/>
            <person name="Bonatto S."/>
            <person name="Bordignon J."/>
            <person name="Brigido M.M."/>
            <person name="Brito C.A."/>
            <person name="Brocchi M."/>
            <person name="Burity H.A."/>
            <person name="Camargo A.A."/>
            <person name="Cardoso D.D.P."/>
            <person name="Carneiro N.P."/>
            <person name="Carraro D.M."/>
            <person name="Carvalho C.M.B."/>
            <person name="Cascardo J.C.M."/>
            <person name="Cavada B.S."/>
            <person name="Chueire L.M.O."/>
            <person name="Creczynski-Pasa T.B."/>
            <person name="Cunha-Junior N.C."/>
            <person name="Fagundes N."/>
            <person name="Falcao C.L."/>
            <person name="Fantinatti F."/>
            <person name="Farias I.P."/>
            <person name="Felipe M.S.S."/>
            <person name="Ferrari L.P."/>
            <person name="Ferro J.A."/>
            <person name="Ferro M.I.T."/>
            <person name="Franco G.R."/>
            <person name="Freitas N.S.A."/>
            <person name="Furlan L.R."/>
            <person name="Gazzinelli R.T."/>
            <person name="Gomes E.A."/>
            <person name="Goncalves P.R."/>
            <person name="Grangeiro T.B."/>
            <person name="Grattapaglia D."/>
            <person name="Grisard E.C."/>
            <person name="Hanna E.S."/>
            <person name="Jardim S.N."/>
            <person name="Laurino J."/>
            <person name="Leoi L.C.T."/>
            <person name="Lima L.F.A."/>
            <person name="Loureiro M.F."/>
            <person name="Lyra M.C.C.P."/>
            <person name="Madeira H.M.F."/>
            <person name="Manfio G.P."/>
            <person name="Maranhao A.Q."/>
            <person name="Martins W.S."/>
            <person name="di Mauro S.M.Z."/>
            <person name="de Medeiros S.R.B."/>
            <person name="Meissner R.V."/>
            <person name="Moreira M.A.M."/>
            <person name="Nascimento F.F."/>
            <person name="Nicolas M.F."/>
            <person name="Oliveira J.G."/>
            <person name="Oliveira S.C."/>
            <person name="Paixao R.F.C."/>
            <person name="Parente J.A."/>
            <person name="Pedrosa F.O."/>
            <person name="Pena S.D.J."/>
            <person name="Pereira J.O."/>
            <person name="Pereira M."/>
            <person name="Pinto L.S.R.C."/>
            <person name="Pinto L.S."/>
            <person name="Porto J.I.R."/>
            <person name="Potrich D.P."/>
            <person name="Ramalho-Neto C.E."/>
            <person name="Reis A.M.M."/>
            <person name="Rigo L.U."/>
            <person name="Rondinelli E."/>
            <person name="Santos E.B.P."/>
            <person name="Santos F.R."/>
            <person name="Schneider M.P.C."/>
            <person name="Seuanez H.N."/>
            <person name="Silva A.M.R."/>
            <person name="da Silva A.L.C."/>
            <person name="Silva D.W."/>
            <person name="Silva R."/>
            <person name="Simoes I.C."/>
            <person name="Simon D."/>
            <person name="Soares C.M.A."/>
            <person name="Soares R.B.A."/>
            <person name="Souza E.M."/>
            <person name="Souza K.R.L."/>
            <person name="Souza R.C."/>
            <person name="Steffens M.B.R."/>
            <person name="Steindel M."/>
            <person name="Teixeira S.R."/>
            <person name="Urmenyi T."/>
            <person name="Vettore A."/>
            <person name="Wassem R."/>
            <person name="Zaha A."/>
            <person name="Simpson A.J.G."/>
        </authorList>
    </citation>
    <scope>NUCLEOTIDE SEQUENCE [LARGE SCALE GENOMIC DNA]</scope>
    <source>
        <strain>ATCC 12472 / DSM 30191 / JCM 1249 / CCUG 213 / NBRC 12614 / NCIMB 9131 / NCTC 9757 / MK</strain>
    </source>
</reference>
<reference key="2">
    <citation type="journal article" date="2004" name="Genet. Mol. Res.">
        <title>Chemotaxis and flagellar genes of Chromobacterium violaceum.</title>
        <authorList>
            <person name="Pereira M."/>
            <person name="Parente J.A."/>
            <person name="Bataus L.A.M."/>
            <person name="Cardoso D.D.P."/>
            <person name="Soares R.B.A."/>
            <person name="Soares C.M.A."/>
        </authorList>
    </citation>
    <scope>DISCUSSION OF CHEMOTAXIS GENOMIC COMPLEXITY</scope>
    <source>
        <strain>ATCC 12472 / DSM 30191 / JCM 1249 / CCUG 213 / NBRC 12614 / NCIMB 9131 / NCTC 9757 / MK</strain>
    </source>
</reference>
<keyword id="KW-0145">Chemotaxis</keyword>
<keyword id="KW-0963">Cytoplasm</keyword>
<keyword id="KW-0378">Hydrolase</keyword>
<keyword id="KW-0597">Phosphoprotein</keyword>
<keyword id="KW-1185">Reference proteome</keyword>